<accession>A1KVG8</accession>
<gene>
    <name evidence="1" type="primary">murI</name>
    <name type="ordered locus">NMC1692</name>
</gene>
<proteinExistence type="inferred from homology"/>
<keyword id="KW-0133">Cell shape</keyword>
<keyword id="KW-0961">Cell wall biogenesis/degradation</keyword>
<keyword id="KW-0413">Isomerase</keyword>
<keyword id="KW-0573">Peptidoglycan synthesis</keyword>
<dbReference type="EC" id="5.1.1.3" evidence="1"/>
<dbReference type="EMBL" id="AM421808">
    <property type="protein sequence ID" value="CAM10872.1"/>
    <property type="molecule type" value="Genomic_DNA"/>
</dbReference>
<dbReference type="RefSeq" id="WP_002226097.1">
    <property type="nucleotide sequence ID" value="NC_008767.1"/>
</dbReference>
<dbReference type="SMR" id="A1KVG8"/>
<dbReference type="KEGG" id="nmc:NMC1692"/>
<dbReference type="HOGENOM" id="CLU_052344_0_2_4"/>
<dbReference type="UniPathway" id="UPA00219"/>
<dbReference type="Proteomes" id="UP000002286">
    <property type="component" value="Chromosome"/>
</dbReference>
<dbReference type="GO" id="GO:0008881">
    <property type="term" value="F:glutamate racemase activity"/>
    <property type="evidence" value="ECO:0007669"/>
    <property type="project" value="UniProtKB-UniRule"/>
</dbReference>
<dbReference type="GO" id="GO:0071555">
    <property type="term" value="P:cell wall organization"/>
    <property type="evidence" value="ECO:0007669"/>
    <property type="project" value="UniProtKB-KW"/>
</dbReference>
<dbReference type="GO" id="GO:0009252">
    <property type="term" value="P:peptidoglycan biosynthetic process"/>
    <property type="evidence" value="ECO:0007669"/>
    <property type="project" value="UniProtKB-UniRule"/>
</dbReference>
<dbReference type="GO" id="GO:0008360">
    <property type="term" value="P:regulation of cell shape"/>
    <property type="evidence" value="ECO:0007669"/>
    <property type="project" value="UniProtKB-KW"/>
</dbReference>
<dbReference type="FunFam" id="3.40.50.1860:FF:000002">
    <property type="entry name" value="Glutamate racemase"/>
    <property type="match status" value="1"/>
</dbReference>
<dbReference type="Gene3D" id="3.40.50.1860">
    <property type="match status" value="2"/>
</dbReference>
<dbReference type="HAMAP" id="MF_00258">
    <property type="entry name" value="Glu_racemase"/>
    <property type="match status" value="1"/>
</dbReference>
<dbReference type="InterPro" id="IPR015942">
    <property type="entry name" value="Asp/Glu/hydantoin_racemase"/>
</dbReference>
<dbReference type="InterPro" id="IPR001920">
    <property type="entry name" value="Asp/Glu_race"/>
</dbReference>
<dbReference type="InterPro" id="IPR033134">
    <property type="entry name" value="Asp/Glu_racemase_AS_2"/>
</dbReference>
<dbReference type="InterPro" id="IPR004391">
    <property type="entry name" value="Glu_race"/>
</dbReference>
<dbReference type="NCBIfam" id="TIGR00067">
    <property type="entry name" value="glut_race"/>
    <property type="match status" value="1"/>
</dbReference>
<dbReference type="PANTHER" id="PTHR21198">
    <property type="entry name" value="GLUTAMATE RACEMASE"/>
    <property type="match status" value="1"/>
</dbReference>
<dbReference type="PANTHER" id="PTHR21198:SF2">
    <property type="entry name" value="GLUTAMATE RACEMASE"/>
    <property type="match status" value="1"/>
</dbReference>
<dbReference type="Pfam" id="PF01177">
    <property type="entry name" value="Asp_Glu_race"/>
    <property type="match status" value="1"/>
</dbReference>
<dbReference type="SUPFAM" id="SSF53681">
    <property type="entry name" value="Aspartate/glutamate racemase"/>
    <property type="match status" value="2"/>
</dbReference>
<dbReference type="PROSITE" id="PS00924">
    <property type="entry name" value="ASP_GLU_RACEMASE_2"/>
    <property type="match status" value="1"/>
</dbReference>
<feature type="chain" id="PRO_1000047590" description="Glutamate racemase">
    <location>
        <begin position="1"/>
        <end position="270"/>
    </location>
</feature>
<feature type="active site" description="Proton donor/acceptor" evidence="1">
    <location>
        <position position="77"/>
    </location>
</feature>
<feature type="active site" description="Proton donor/acceptor" evidence="1">
    <location>
        <position position="189"/>
    </location>
</feature>
<feature type="binding site" evidence="1">
    <location>
        <begin position="14"/>
        <end position="15"/>
    </location>
    <ligand>
        <name>substrate</name>
    </ligand>
</feature>
<feature type="binding site" evidence="1">
    <location>
        <begin position="46"/>
        <end position="47"/>
    </location>
    <ligand>
        <name>substrate</name>
    </ligand>
</feature>
<feature type="binding site" evidence="1">
    <location>
        <begin position="78"/>
        <end position="79"/>
    </location>
    <ligand>
        <name>substrate</name>
    </ligand>
</feature>
<feature type="binding site" evidence="1">
    <location>
        <begin position="190"/>
        <end position="191"/>
    </location>
    <ligand>
        <name>substrate</name>
    </ligand>
</feature>
<comment type="function">
    <text evidence="1">Provides the (R)-glutamate required for cell wall biosynthesis.</text>
</comment>
<comment type="catalytic activity">
    <reaction evidence="1">
        <text>L-glutamate = D-glutamate</text>
        <dbReference type="Rhea" id="RHEA:12813"/>
        <dbReference type="ChEBI" id="CHEBI:29985"/>
        <dbReference type="ChEBI" id="CHEBI:29986"/>
        <dbReference type="EC" id="5.1.1.3"/>
    </reaction>
</comment>
<comment type="pathway">
    <text evidence="1">Cell wall biogenesis; peptidoglycan biosynthesis.</text>
</comment>
<comment type="similarity">
    <text evidence="1">Belongs to the aspartate/glutamate racemases family.</text>
</comment>
<sequence length="270" mass="29615">MENIGRQRPIGVFDSGIGGLTNVRALMERLPMENIIYFGDTARVPYGTKSKATIENFSMQIVDFLLEHDVKAMVIACNTIAAVAGQKIRQKTGNMPVLDVISAGAKAALATTRNNKIGIIATNTTVNSNAYARAIHRNNPDTLVRTQAAPLLVPLVEEGWLEHEVTRLTVCEYLKPLLADGIDTLVLGCTHFPLLKPLIGREAHNVALVDSAITTAEETARVLAQEGLLNTDNNNPDYRFYVSDIPLKFRTIGERFLGRTMEQIEMVSLG</sequence>
<organism>
    <name type="scientific">Neisseria meningitidis serogroup C / serotype 2a (strain ATCC 700532 / DSM 15464 / FAM18)</name>
    <dbReference type="NCBI Taxonomy" id="272831"/>
    <lineage>
        <taxon>Bacteria</taxon>
        <taxon>Pseudomonadati</taxon>
        <taxon>Pseudomonadota</taxon>
        <taxon>Betaproteobacteria</taxon>
        <taxon>Neisseriales</taxon>
        <taxon>Neisseriaceae</taxon>
        <taxon>Neisseria</taxon>
    </lineage>
</organism>
<evidence type="ECO:0000255" key="1">
    <source>
        <dbReference type="HAMAP-Rule" id="MF_00258"/>
    </source>
</evidence>
<name>MURI_NEIMF</name>
<reference key="1">
    <citation type="journal article" date="2007" name="PLoS Genet.">
        <title>Meningococcal genetic variation mechanisms viewed through comparative analysis of serogroup C strain FAM18.</title>
        <authorList>
            <person name="Bentley S.D."/>
            <person name="Vernikos G.S."/>
            <person name="Snyder L.A.S."/>
            <person name="Churcher C."/>
            <person name="Arrowsmith C."/>
            <person name="Chillingworth T."/>
            <person name="Cronin A."/>
            <person name="Davis P.H."/>
            <person name="Holroyd N.E."/>
            <person name="Jagels K."/>
            <person name="Maddison M."/>
            <person name="Moule S."/>
            <person name="Rabbinowitsch E."/>
            <person name="Sharp S."/>
            <person name="Unwin L."/>
            <person name="Whitehead S."/>
            <person name="Quail M.A."/>
            <person name="Achtman M."/>
            <person name="Barrell B.G."/>
            <person name="Saunders N.J."/>
            <person name="Parkhill J."/>
        </authorList>
    </citation>
    <scope>NUCLEOTIDE SEQUENCE [LARGE SCALE GENOMIC DNA]</scope>
    <source>
        <strain>ATCC 700532 / DSM 15464 / FAM18</strain>
    </source>
</reference>
<protein>
    <recommendedName>
        <fullName evidence="1">Glutamate racemase</fullName>
        <ecNumber evidence="1">5.1.1.3</ecNumber>
    </recommendedName>
</protein>